<feature type="chain" id="PRO_0000220719" description="Seed linoleate 9S-lipoxygenase-3">
    <location>
        <begin position="1"/>
        <end position="857"/>
    </location>
</feature>
<feature type="domain" description="PLAT" evidence="1">
    <location>
        <begin position="38"/>
        <end position="163"/>
    </location>
</feature>
<feature type="domain" description="Lipoxygenase" evidence="2">
    <location>
        <begin position="166"/>
        <end position="857"/>
    </location>
</feature>
<feature type="region of interest" description="Disordered" evidence="3">
    <location>
        <begin position="212"/>
        <end position="257"/>
    </location>
</feature>
<feature type="compositionally biased region" description="Basic residues" evidence="3">
    <location>
        <begin position="234"/>
        <end position="243"/>
    </location>
</feature>
<feature type="compositionally biased region" description="Basic and acidic residues" evidence="3">
    <location>
        <begin position="244"/>
        <end position="257"/>
    </location>
</feature>
<feature type="binding site">
    <location>
        <position position="518"/>
    </location>
    <ligand>
        <name>Fe cation</name>
        <dbReference type="ChEBI" id="CHEBI:24875"/>
        <note>catalytic</note>
    </ligand>
</feature>
<feature type="binding site">
    <location>
        <position position="523"/>
    </location>
    <ligand>
        <name>Fe cation</name>
        <dbReference type="ChEBI" id="CHEBI:24875"/>
        <note>catalytic</note>
    </ligand>
</feature>
<feature type="binding site">
    <location>
        <position position="709"/>
    </location>
    <ligand>
        <name>Fe cation</name>
        <dbReference type="ChEBI" id="CHEBI:24875"/>
        <note>catalytic</note>
    </ligand>
</feature>
<feature type="binding site">
    <location>
        <position position="713"/>
    </location>
    <ligand>
        <name>Fe cation</name>
        <dbReference type="ChEBI" id="CHEBI:24875"/>
        <note>catalytic</note>
    </ligand>
</feature>
<feature type="binding site">
    <location>
        <position position="857"/>
    </location>
    <ligand>
        <name>Fe cation</name>
        <dbReference type="ChEBI" id="CHEBI:24875"/>
        <note>catalytic</note>
    </ligand>
</feature>
<feature type="sequence variant" description="In strain: cv. Provar.">
    <original>H</original>
    <variation>D</variation>
    <location>
        <position position="25"/>
    </location>
</feature>
<feature type="sequence variant" description="In strain: cv. Provar.">
    <original>P</original>
    <variation>S</variation>
    <location>
        <position position="57"/>
    </location>
</feature>
<feature type="sequence variant" description="In strain: cv. Provar.">
    <original>L</original>
    <variation>P</variation>
    <location>
        <position position="112"/>
    </location>
</feature>
<feature type="sequence variant" description="In strain: cv. Provar.">
    <original>V</original>
    <variation>I</variation>
    <location>
        <position position="201"/>
    </location>
</feature>
<feature type="sequence variant" description="In strain: cv. Provar.">
    <original>E</original>
    <variation>D</variation>
    <location>
        <position position="382"/>
    </location>
</feature>
<feature type="sequence variant" description="In strain: cv. Provar.">
    <original>G</original>
    <variation>D</variation>
    <location>
        <position position="428"/>
    </location>
</feature>
<feature type="sequence variant" description="In strain: cv. Provar.">
    <original>A</original>
    <variation>T</variation>
    <location>
        <position position="630"/>
    </location>
</feature>
<feature type="mutagenesis site" description="No loss of iron-binding; loss of catalytic activity." evidence="9">
    <original>N</original>
    <variation>A</variation>
    <variation>S</variation>
    <location>
        <position position="713"/>
    </location>
</feature>
<feature type="mutagenesis site" description="No loss of iron-binding; no change in catalytic activity." evidence="9">
    <original>N</original>
    <variation>H</variation>
    <location>
        <position position="713"/>
    </location>
</feature>
<feature type="strand" evidence="11">
    <location>
        <begin position="10"/>
        <end position="20"/>
    </location>
</feature>
<feature type="helix" evidence="11">
    <location>
        <begin position="21"/>
        <end position="23"/>
    </location>
</feature>
<feature type="turn" evidence="11">
    <location>
        <begin position="26"/>
        <end position="30"/>
    </location>
</feature>
<feature type="turn" evidence="17">
    <location>
        <begin position="39"/>
        <end position="41"/>
    </location>
</feature>
<feature type="strand" evidence="17">
    <location>
        <begin position="44"/>
        <end position="48"/>
    </location>
</feature>
<feature type="helix" evidence="11">
    <location>
        <begin position="50"/>
        <end position="53"/>
    </location>
</feature>
<feature type="strand" evidence="11">
    <location>
        <begin position="55"/>
        <end position="68"/>
    </location>
</feature>
<feature type="strand" evidence="11">
    <location>
        <begin position="70"/>
        <end position="76"/>
    </location>
</feature>
<feature type="strand" evidence="16">
    <location>
        <begin position="84"/>
        <end position="86"/>
    </location>
</feature>
<feature type="turn" evidence="13">
    <location>
        <begin position="89"/>
        <end position="91"/>
    </location>
</feature>
<feature type="strand" evidence="11">
    <location>
        <begin position="97"/>
        <end position="100"/>
    </location>
</feature>
<feature type="strand" evidence="11">
    <location>
        <begin position="103"/>
        <end position="105"/>
    </location>
</feature>
<feature type="strand" evidence="16">
    <location>
        <begin position="107"/>
        <end position="109"/>
    </location>
</feature>
<feature type="strand" evidence="11">
    <location>
        <begin position="112"/>
        <end position="119"/>
    </location>
</feature>
<feature type="strand" evidence="11">
    <location>
        <begin position="121"/>
        <end position="123"/>
    </location>
</feature>
<feature type="strand" evidence="11">
    <location>
        <begin position="125"/>
        <end position="133"/>
    </location>
</feature>
<feature type="strand" evidence="11">
    <location>
        <begin position="135"/>
        <end position="137"/>
    </location>
</feature>
<feature type="strand" evidence="11">
    <location>
        <begin position="141"/>
        <end position="149"/>
    </location>
</feature>
<feature type="helix" evidence="11">
    <location>
        <begin position="152"/>
        <end position="154"/>
    </location>
</feature>
<feature type="strand" evidence="12">
    <location>
        <begin position="155"/>
        <end position="157"/>
    </location>
</feature>
<feature type="strand" evidence="11">
    <location>
        <begin position="159"/>
        <end position="162"/>
    </location>
</feature>
<feature type="turn" evidence="11">
    <location>
        <begin position="169"/>
        <end position="171"/>
    </location>
</feature>
<feature type="turn" evidence="11">
    <location>
        <begin position="174"/>
        <end position="176"/>
    </location>
</feature>
<feature type="helix" evidence="11">
    <location>
        <begin position="177"/>
        <end position="188"/>
    </location>
</feature>
<feature type="helix" evidence="11">
    <location>
        <begin position="213"/>
        <end position="215"/>
    </location>
</feature>
<feature type="helix" evidence="16">
    <location>
        <begin position="217"/>
        <end position="219"/>
    </location>
</feature>
<feature type="strand" evidence="11">
    <location>
        <begin position="224"/>
        <end position="230"/>
    </location>
</feature>
<feature type="strand" evidence="12">
    <location>
        <begin position="246"/>
        <end position="250"/>
    </location>
</feature>
<feature type="helix" evidence="16">
    <location>
        <begin position="260"/>
        <end position="262"/>
    </location>
</feature>
<feature type="helix" evidence="16">
    <location>
        <begin position="269"/>
        <end position="271"/>
    </location>
</feature>
<feature type="helix" evidence="11">
    <location>
        <begin position="273"/>
        <end position="278"/>
    </location>
</feature>
<feature type="turn" evidence="11">
    <location>
        <begin position="279"/>
        <end position="283"/>
    </location>
</feature>
<feature type="helix" evidence="11">
    <location>
        <begin position="284"/>
        <end position="293"/>
    </location>
</feature>
<feature type="strand" evidence="11">
    <location>
        <begin position="294"/>
        <end position="297"/>
    </location>
</feature>
<feature type="helix" evidence="11">
    <location>
        <begin position="304"/>
        <end position="308"/>
    </location>
</feature>
<feature type="turn" evidence="11">
    <location>
        <begin position="309"/>
        <end position="313"/>
    </location>
</feature>
<feature type="helix" evidence="11">
    <location>
        <begin position="319"/>
        <end position="324"/>
    </location>
</feature>
<feature type="turn" evidence="11">
    <location>
        <begin position="325"/>
        <end position="327"/>
    </location>
</feature>
<feature type="strand" evidence="11">
    <location>
        <begin position="328"/>
        <end position="330"/>
    </location>
</feature>
<feature type="strand" evidence="11">
    <location>
        <begin position="332"/>
        <end position="335"/>
    </location>
</feature>
<feature type="strand" evidence="11">
    <location>
        <begin position="339"/>
        <end position="341"/>
    </location>
</feature>
<feature type="helix" evidence="11">
    <location>
        <begin position="349"/>
        <end position="351"/>
    </location>
</feature>
<feature type="helix" evidence="11">
    <location>
        <begin position="357"/>
        <end position="359"/>
    </location>
</feature>
<feature type="helix" evidence="11">
    <location>
        <begin position="361"/>
        <end position="370"/>
    </location>
</feature>
<feature type="strand" evidence="12">
    <location>
        <begin position="371"/>
        <end position="373"/>
    </location>
</feature>
<feature type="strand" evidence="11">
    <location>
        <begin position="382"/>
        <end position="384"/>
    </location>
</feature>
<feature type="strand" evidence="11">
    <location>
        <begin position="390"/>
        <end position="392"/>
    </location>
</feature>
<feature type="helix" evidence="11">
    <location>
        <begin position="393"/>
        <end position="396"/>
    </location>
</feature>
<feature type="helix" evidence="11">
    <location>
        <begin position="403"/>
        <end position="405"/>
    </location>
</feature>
<feature type="strand" evidence="11">
    <location>
        <begin position="408"/>
        <end position="410"/>
    </location>
</feature>
<feature type="helix" evidence="11">
    <location>
        <begin position="415"/>
        <end position="420"/>
    </location>
</feature>
<feature type="strand" evidence="11">
    <location>
        <begin position="424"/>
        <end position="428"/>
    </location>
</feature>
<feature type="turn" evidence="11">
    <location>
        <begin position="431"/>
        <end position="433"/>
    </location>
</feature>
<feature type="helix" evidence="11">
    <location>
        <begin position="434"/>
        <end position="436"/>
    </location>
</feature>
<feature type="helix" evidence="11">
    <location>
        <begin position="437"/>
        <end position="441"/>
    </location>
</feature>
<feature type="turn" evidence="11">
    <location>
        <begin position="442"/>
        <end position="444"/>
    </location>
</feature>
<feature type="strand" evidence="11">
    <location>
        <begin position="449"/>
        <end position="456"/>
    </location>
</feature>
<feature type="strand" evidence="11">
    <location>
        <begin position="462"/>
        <end position="472"/>
    </location>
</feature>
<feature type="strand" evidence="11">
    <location>
        <begin position="474"/>
        <end position="477"/>
    </location>
</feature>
<feature type="strand" evidence="11">
    <location>
        <begin position="482"/>
        <end position="486"/>
    </location>
</feature>
<feature type="helix" evidence="11">
    <location>
        <begin position="492"/>
        <end position="515"/>
    </location>
</feature>
<feature type="helix" evidence="11">
    <location>
        <begin position="516"/>
        <end position="522"/>
    </location>
</feature>
<feature type="helix" evidence="11">
    <location>
        <begin position="523"/>
        <end position="536"/>
    </location>
</feature>
<feature type="helix" evidence="11">
    <location>
        <begin position="542"/>
        <end position="547"/>
    </location>
</feature>
<feature type="helix" evidence="11">
    <location>
        <begin position="548"/>
        <end position="551"/>
    </location>
</feature>
<feature type="helix" evidence="11">
    <location>
        <begin position="554"/>
        <end position="564"/>
    </location>
</feature>
<feature type="strand" evidence="12">
    <location>
        <begin position="566"/>
        <end position="569"/>
    </location>
</feature>
<feature type="helix" evidence="11">
    <location>
        <begin position="571"/>
        <end position="575"/>
    </location>
</feature>
<feature type="helix" evidence="11">
    <location>
        <begin position="579"/>
        <end position="581"/>
    </location>
</feature>
<feature type="helix" evidence="11">
    <location>
        <begin position="582"/>
        <end position="589"/>
    </location>
</feature>
<feature type="helix" evidence="11">
    <location>
        <begin position="590"/>
        <end position="592"/>
    </location>
</feature>
<feature type="helix" evidence="11">
    <location>
        <begin position="595"/>
        <end position="598"/>
    </location>
</feature>
<feature type="helix" evidence="11">
    <location>
        <begin position="600"/>
        <end position="606"/>
    </location>
</feature>
<feature type="strand" evidence="11">
    <location>
        <begin position="609"/>
        <end position="612"/>
    </location>
</feature>
<feature type="strand" evidence="11">
    <location>
        <begin position="619"/>
        <end position="625"/>
    </location>
</feature>
<feature type="helix" evidence="11">
    <location>
        <begin position="628"/>
        <end position="651"/>
    </location>
</feature>
<feature type="helix" evidence="11">
    <location>
        <begin position="656"/>
        <end position="659"/>
    </location>
</feature>
<feature type="helix" evidence="11">
    <location>
        <begin position="662"/>
        <end position="673"/>
    </location>
</feature>
<feature type="turn" evidence="11">
    <location>
        <begin position="674"/>
        <end position="676"/>
    </location>
</feature>
<feature type="helix" evidence="11">
    <location>
        <begin position="677"/>
        <end position="679"/>
    </location>
</feature>
<feature type="strand" evidence="14">
    <location>
        <begin position="688"/>
        <end position="690"/>
    </location>
</feature>
<feature type="helix" evidence="11">
    <location>
        <begin position="691"/>
        <end position="705"/>
    </location>
</feature>
<feature type="helix" evidence="11">
    <location>
        <begin position="707"/>
        <end position="713"/>
    </location>
</feature>
<feature type="helix" evidence="11">
    <location>
        <begin position="716"/>
        <end position="720"/>
    </location>
</feature>
<feature type="turn" evidence="11">
    <location>
        <begin position="723"/>
        <end position="725"/>
    </location>
</feature>
<feature type="strand" evidence="14">
    <location>
        <begin position="730"/>
        <end position="732"/>
    </location>
</feature>
<feature type="strand" evidence="15">
    <location>
        <begin position="737"/>
        <end position="739"/>
    </location>
</feature>
<feature type="helix" evidence="11">
    <location>
        <begin position="740"/>
        <end position="747"/>
    </location>
</feature>
<feature type="helix" evidence="11">
    <location>
        <begin position="749"/>
        <end position="754"/>
    </location>
</feature>
<feature type="helix" evidence="11">
    <location>
        <begin position="760"/>
        <end position="773"/>
    </location>
</feature>
<feature type="turn" evidence="11">
    <location>
        <begin position="783"/>
        <end position="785"/>
    </location>
</feature>
<feature type="helix" evidence="11">
    <location>
        <begin position="795"/>
        <end position="818"/>
    </location>
</feature>
<feature type="helix" evidence="11">
    <location>
        <begin position="825"/>
        <end position="827"/>
    </location>
</feature>
<feature type="turn" evidence="11">
    <location>
        <begin position="828"/>
        <end position="832"/>
    </location>
</feature>
<feature type="strand" evidence="11">
    <location>
        <begin position="844"/>
        <end position="846"/>
    </location>
</feature>
<feature type="strand" evidence="11">
    <location>
        <begin position="852"/>
        <end position="854"/>
    </location>
</feature>
<dbReference type="EC" id="1.13.11.58"/>
<dbReference type="EMBL" id="X06928">
    <property type="protein sequence ID" value="CAA30016.1"/>
    <property type="molecule type" value="Genomic_DNA"/>
</dbReference>
<dbReference type="EMBL" id="X13302">
    <property type="protein sequence ID" value="CAA31664.1"/>
    <property type="status" value="ALT_SEQ"/>
    <property type="molecule type" value="mRNA"/>
</dbReference>
<dbReference type="EMBL" id="U50081">
    <property type="protein sequence ID" value="AAB41272.1"/>
    <property type="molecule type" value="mRNA"/>
</dbReference>
<dbReference type="PIR" id="S01864">
    <property type="entry name" value="S01864"/>
</dbReference>
<dbReference type="RefSeq" id="NP_001235383.1">
    <property type="nucleotide sequence ID" value="NM_001248454.1"/>
</dbReference>
<dbReference type="PDB" id="1HU9">
    <property type="method" value="X-ray"/>
    <property type="resolution" value="2.20 A"/>
    <property type="chains" value="A=1-857"/>
</dbReference>
<dbReference type="PDB" id="1IK3">
    <property type="method" value="X-ray"/>
    <property type="resolution" value="2.00 A"/>
    <property type="chains" value="A=1-857"/>
</dbReference>
<dbReference type="PDB" id="1JNQ">
    <property type="method" value="X-ray"/>
    <property type="resolution" value="2.10 A"/>
    <property type="chains" value="A=1-857"/>
</dbReference>
<dbReference type="PDB" id="1LNH">
    <property type="method" value="X-ray"/>
    <property type="resolution" value="2.60 A"/>
    <property type="chains" value="A=1-857"/>
</dbReference>
<dbReference type="PDB" id="1N8Q">
    <property type="method" value="X-ray"/>
    <property type="resolution" value="2.10 A"/>
    <property type="chains" value="A=1-857"/>
</dbReference>
<dbReference type="PDB" id="1NO3">
    <property type="method" value="X-ray"/>
    <property type="resolution" value="2.15 A"/>
    <property type="chains" value="A=1-857"/>
</dbReference>
<dbReference type="PDB" id="1ROV">
    <property type="method" value="X-ray"/>
    <property type="resolution" value="2.00 A"/>
    <property type="chains" value="A=1-857"/>
</dbReference>
<dbReference type="PDB" id="1RRH">
    <property type="method" value="X-ray"/>
    <property type="resolution" value="2.00 A"/>
    <property type="chains" value="A=1-857"/>
</dbReference>
<dbReference type="PDB" id="1RRL">
    <property type="method" value="X-ray"/>
    <property type="resolution" value="2.09 A"/>
    <property type="chains" value="A/B=1-857"/>
</dbReference>
<dbReference type="PDBsum" id="1HU9"/>
<dbReference type="PDBsum" id="1IK3"/>
<dbReference type="PDBsum" id="1JNQ"/>
<dbReference type="PDBsum" id="1LNH"/>
<dbReference type="PDBsum" id="1N8Q"/>
<dbReference type="PDBsum" id="1NO3"/>
<dbReference type="PDBsum" id="1ROV"/>
<dbReference type="PDBsum" id="1RRH"/>
<dbReference type="PDBsum" id="1RRL"/>
<dbReference type="SMR" id="P09186"/>
<dbReference type="STRING" id="3847.P09186"/>
<dbReference type="BindingDB" id="P09186"/>
<dbReference type="PaxDb" id="3847-GLYMA15G03030.1"/>
<dbReference type="GeneID" id="547869"/>
<dbReference type="KEGG" id="gmx:547869"/>
<dbReference type="eggNOG" id="ENOG502QQSP">
    <property type="taxonomic scope" value="Eukaryota"/>
</dbReference>
<dbReference type="InParanoid" id="P09186"/>
<dbReference type="OrthoDB" id="407298at2759"/>
<dbReference type="BRENDA" id="1.13.11.B6">
    <property type="organism ID" value="2483"/>
</dbReference>
<dbReference type="UniPathway" id="UPA00382"/>
<dbReference type="EvolutionaryTrace" id="P09186"/>
<dbReference type="Proteomes" id="UP000008827">
    <property type="component" value="Unplaced"/>
</dbReference>
<dbReference type="GO" id="GO:0005737">
    <property type="term" value="C:cytoplasm"/>
    <property type="evidence" value="ECO:0007669"/>
    <property type="project" value="UniProtKB-SubCell"/>
</dbReference>
<dbReference type="GO" id="GO:1990136">
    <property type="term" value="F:linoleate 9S-lipoxygenase activity"/>
    <property type="evidence" value="ECO:0007669"/>
    <property type="project" value="UniProtKB-EC"/>
</dbReference>
<dbReference type="GO" id="GO:0046872">
    <property type="term" value="F:metal ion binding"/>
    <property type="evidence" value="ECO:0007669"/>
    <property type="project" value="UniProtKB-KW"/>
</dbReference>
<dbReference type="GO" id="GO:0016702">
    <property type="term" value="F:oxidoreductase activity, acting on single donors with incorporation of molecular oxygen, incorporation of two atoms of oxygen"/>
    <property type="evidence" value="ECO:0000318"/>
    <property type="project" value="GO_Central"/>
</dbReference>
<dbReference type="GO" id="GO:0006633">
    <property type="term" value="P:fatty acid biosynthetic process"/>
    <property type="evidence" value="ECO:0007669"/>
    <property type="project" value="UniProtKB-KW"/>
</dbReference>
<dbReference type="GO" id="GO:0034440">
    <property type="term" value="P:lipid oxidation"/>
    <property type="evidence" value="ECO:0000318"/>
    <property type="project" value="GO_Central"/>
</dbReference>
<dbReference type="GO" id="GO:0031408">
    <property type="term" value="P:oxylipin biosynthetic process"/>
    <property type="evidence" value="ECO:0007669"/>
    <property type="project" value="UniProtKB-UniPathway"/>
</dbReference>
<dbReference type="CDD" id="cd01751">
    <property type="entry name" value="PLAT_LH2"/>
    <property type="match status" value="1"/>
</dbReference>
<dbReference type="FunFam" id="1.20.245.10:FF:000002">
    <property type="entry name" value="Lipoxygenase"/>
    <property type="match status" value="1"/>
</dbReference>
<dbReference type="FunFam" id="3.10.450.60:FF:000002">
    <property type="entry name" value="Lipoxygenase"/>
    <property type="match status" value="1"/>
</dbReference>
<dbReference type="FunFam" id="4.10.375.10:FF:000001">
    <property type="entry name" value="Lipoxygenase"/>
    <property type="match status" value="1"/>
</dbReference>
<dbReference type="Gene3D" id="3.10.450.60">
    <property type="match status" value="1"/>
</dbReference>
<dbReference type="Gene3D" id="4.10.375.10">
    <property type="entry name" value="Lipoxygenase-1, Domain 2"/>
    <property type="match status" value="1"/>
</dbReference>
<dbReference type="Gene3D" id="4.10.372.10">
    <property type="entry name" value="Lipoxygenase-1, Domain 3"/>
    <property type="match status" value="1"/>
</dbReference>
<dbReference type="Gene3D" id="1.20.245.10">
    <property type="entry name" value="Lipoxygenase-1, Domain 5"/>
    <property type="match status" value="1"/>
</dbReference>
<dbReference type="Gene3D" id="2.60.60.20">
    <property type="entry name" value="PLAT/LH2 domain"/>
    <property type="match status" value="1"/>
</dbReference>
<dbReference type="InterPro" id="IPR000907">
    <property type="entry name" value="LipOase"/>
</dbReference>
<dbReference type="InterPro" id="IPR013819">
    <property type="entry name" value="LipOase_C"/>
</dbReference>
<dbReference type="InterPro" id="IPR036226">
    <property type="entry name" value="LipOase_C_sf"/>
</dbReference>
<dbReference type="InterPro" id="IPR020834">
    <property type="entry name" value="LipOase_CS"/>
</dbReference>
<dbReference type="InterPro" id="IPR020833">
    <property type="entry name" value="LipOase_Fe_BS"/>
</dbReference>
<dbReference type="InterPro" id="IPR001246">
    <property type="entry name" value="LipOase_plant"/>
</dbReference>
<dbReference type="InterPro" id="IPR042057">
    <property type="entry name" value="Lipoxy_PLAT/LH2"/>
</dbReference>
<dbReference type="InterPro" id="IPR027433">
    <property type="entry name" value="Lipoxygenase_dom_3"/>
</dbReference>
<dbReference type="InterPro" id="IPR001024">
    <property type="entry name" value="PLAT/LH2_dom"/>
</dbReference>
<dbReference type="InterPro" id="IPR036392">
    <property type="entry name" value="PLAT/LH2_dom_sf"/>
</dbReference>
<dbReference type="PANTHER" id="PTHR11771">
    <property type="entry name" value="LIPOXYGENASE"/>
    <property type="match status" value="1"/>
</dbReference>
<dbReference type="Pfam" id="PF00305">
    <property type="entry name" value="Lipoxygenase"/>
    <property type="match status" value="1"/>
</dbReference>
<dbReference type="Pfam" id="PF01477">
    <property type="entry name" value="PLAT"/>
    <property type="match status" value="1"/>
</dbReference>
<dbReference type="PRINTS" id="PR00087">
    <property type="entry name" value="LIPOXYGENASE"/>
</dbReference>
<dbReference type="PRINTS" id="PR00468">
    <property type="entry name" value="PLTLPOXGNASE"/>
</dbReference>
<dbReference type="SMART" id="SM00308">
    <property type="entry name" value="LH2"/>
    <property type="match status" value="1"/>
</dbReference>
<dbReference type="SUPFAM" id="SSF49723">
    <property type="entry name" value="Lipase/lipooxygenase domain (PLAT/LH2 domain)"/>
    <property type="match status" value="1"/>
</dbReference>
<dbReference type="SUPFAM" id="SSF48484">
    <property type="entry name" value="Lipoxigenase"/>
    <property type="match status" value="1"/>
</dbReference>
<dbReference type="PROSITE" id="PS00711">
    <property type="entry name" value="LIPOXYGENASE_1"/>
    <property type="match status" value="1"/>
</dbReference>
<dbReference type="PROSITE" id="PS00081">
    <property type="entry name" value="LIPOXYGENASE_2"/>
    <property type="match status" value="1"/>
</dbReference>
<dbReference type="PROSITE" id="PS51393">
    <property type="entry name" value="LIPOXYGENASE_3"/>
    <property type="match status" value="1"/>
</dbReference>
<dbReference type="PROSITE" id="PS50095">
    <property type="entry name" value="PLAT"/>
    <property type="match status" value="1"/>
</dbReference>
<proteinExistence type="evidence at protein level"/>
<evidence type="ECO:0000255" key="1">
    <source>
        <dbReference type="PROSITE-ProRule" id="PRU00152"/>
    </source>
</evidence>
<evidence type="ECO:0000255" key="2">
    <source>
        <dbReference type="PROSITE-ProRule" id="PRU00726"/>
    </source>
</evidence>
<evidence type="ECO:0000256" key="3">
    <source>
        <dbReference type="SAM" id="MobiDB-lite"/>
    </source>
</evidence>
<evidence type="ECO:0000269" key="4">
    <source>
    </source>
</evidence>
<evidence type="ECO:0000269" key="5">
    <source>
    </source>
</evidence>
<evidence type="ECO:0000269" key="6">
    <source>
    </source>
</evidence>
<evidence type="ECO:0000269" key="7">
    <source>
    </source>
</evidence>
<evidence type="ECO:0000269" key="8">
    <source>
    </source>
</evidence>
<evidence type="ECO:0000269" key="9">
    <source>
    </source>
</evidence>
<evidence type="ECO:0000305" key="10"/>
<evidence type="ECO:0007829" key="11">
    <source>
        <dbReference type="PDB" id="1IK3"/>
    </source>
</evidence>
<evidence type="ECO:0007829" key="12">
    <source>
        <dbReference type="PDB" id="1JNQ"/>
    </source>
</evidence>
<evidence type="ECO:0007829" key="13">
    <source>
        <dbReference type="PDB" id="1LNH"/>
    </source>
</evidence>
<evidence type="ECO:0007829" key="14">
    <source>
        <dbReference type="PDB" id="1N8Q"/>
    </source>
</evidence>
<evidence type="ECO:0007829" key="15">
    <source>
        <dbReference type="PDB" id="1ROV"/>
    </source>
</evidence>
<evidence type="ECO:0007829" key="16">
    <source>
        <dbReference type="PDB" id="1RRH"/>
    </source>
</evidence>
<evidence type="ECO:0007829" key="17">
    <source>
        <dbReference type="PDB" id="1RRL"/>
    </source>
</evidence>
<keyword id="KW-0002">3D-structure</keyword>
<keyword id="KW-0963">Cytoplasm</keyword>
<keyword id="KW-0223">Dioxygenase</keyword>
<keyword id="KW-0275">Fatty acid biosynthesis</keyword>
<keyword id="KW-0276">Fatty acid metabolism</keyword>
<keyword id="KW-0408">Iron</keyword>
<keyword id="KW-0444">Lipid biosynthesis</keyword>
<keyword id="KW-0443">Lipid metabolism</keyword>
<keyword id="KW-0479">Metal-binding</keyword>
<keyword id="KW-0560">Oxidoreductase</keyword>
<keyword id="KW-0925">Oxylipin biosynthesis</keyword>
<keyword id="KW-1185">Reference proteome</keyword>
<accession>P09186</accession>
<accession>Q39838</accession>
<reference key="1">
    <citation type="journal article" date="1988" name="Mol. Gen. Genet.">
        <title>Isolation and characterization of a soybean (Glycine max) lipoxygenase-3 gene.</title>
        <authorList>
            <person name="Yenofsky R.L."/>
            <person name="Fine M."/>
            <person name="Liu C."/>
        </authorList>
    </citation>
    <scope>NUCLEOTIDE SEQUENCE</scope>
</reference>
<reference key="2">
    <citation type="submission" date="1988-12" db="EMBL/GenBank/DDBJ databases">
        <authorList>
            <person name="Yenofsky R.L."/>
        </authorList>
    </citation>
    <scope>SEQUENCE REVISION</scope>
</reference>
<reference key="3">
    <citation type="journal article" date="1994" name="Biochemistry">
        <title>Position 713 is critical for catalysis but not iron binding in soybean lipoxygenase 3.</title>
        <authorList>
            <person name="Kramer J.A."/>
            <person name="Johnson K.R."/>
            <person name="Dunham W.R."/>
            <person name="Sands R.H."/>
            <person name="Funk M.O. Jr."/>
        </authorList>
    </citation>
    <scope>NUCLEOTIDE SEQUENCE</scope>
    <scope>MUTAGENESIS OF ASN-713</scope>
    <source>
        <strain>cv. Provar</strain>
    </source>
</reference>
<reference key="4">
    <citation type="journal article" date="1997" name="Proteins">
        <title>Structure of soybean lipoxygenase L3 and a comparison with its L1 isoenzyme.</title>
        <authorList>
            <person name="Skrzypczak-Jankun E."/>
            <person name="Amzel L.M."/>
            <person name="Kroa B.A."/>
            <person name="Funk M.O. Jr."/>
        </authorList>
    </citation>
    <scope>X-RAY CRYSTALLOGRAPHY (2.6 ANGSTROMS)</scope>
    <source>
        <strain>cv. Provar</strain>
    </source>
</reference>
<reference key="5">
    <citation type="journal article" date="1998" name="Biochemistry">
        <title>Structural and thermochemical characterization of lipoxygenase-catechol complexes.</title>
        <authorList>
            <person name="Pham C."/>
            <person name="Jankun J."/>
            <person name="Skrzypczak-Jankun E."/>
            <person name="Flowers R.A."/>
            <person name="Funk M.O. Jr."/>
        </authorList>
    </citation>
    <scope>X-RAY CRYSTALLOGRAPHY (2.2 ANGSTROMS)</scope>
    <source>
        <strain>cv. Provar</strain>
    </source>
</reference>
<reference key="6">
    <citation type="journal article" date="2001" name="J. Am. Chem. Soc.">
        <title>Three-dimensional structure of a purple lipoxygenase.</title>
        <authorList>
            <person name="Skrzypczak-Jankun E."/>
            <person name="Bross R.A."/>
            <person name="Carroll R.T."/>
            <person name="Dunham W.R."/>
            <person name="Funk M.O. Jr."/>
        </authorList>
    </citation>
    <scope>X-RAY CRYSTALLOGRAPHY (2.0 ANGSTROMS) IN COMPLEX WITH IRON IONS AND SUBSTRATE</scope>
    <source>
        <strain>cv. Provar</strain>
    </source>
</reference>
<reference key="7">
    <citation type="journal article" date="2003" name="Int. J. Mol. Med.">
        <title>Structure of curcumin in complex with lipoxygenase and its significance in cancer.</title>
        <authorList>
            <person name="Skrzypczak-Jankun E."/>
            <person name="Zhou K."/>
            <person name="McCabe N.P."/>
            <person name="Selman S.H."/>
            <person name="Jankun J."/>
        </authorList>
    </citation>
    <scope>X-RAY CRYSTALLOGRAPHY (2.2 ANGSTROMS) IN COMPLEX WITH IRON IONS AND CURCUMIN</scope>
</reference>
<reference key="8">
    <citation type="journal article" date="2003" name="Int. J. Mol. Med.">
        <title>Inhibition of lipoxygenase by (-)-epigallocatechin gallate: X-ray analysis at 2.1 A reveals degradation of EGCG and shows soybean LOX-3 complex with EGC instead.</title>
        <authorList>
            <person name="Skrzypczak-Jankun E."/>
            <person name="Zhou K."/>
            <person name="Jankun J."/>
        </authorList>
    </citation>
    <scope>X-RAY CRYSTALLOGRAPHY (2.1 ANGSTROMS) IN COMPLEX WITH IRON IONS AND THE INHIBITOR EPIGALLO-CATECHIN</scope>
</reference>
<reference key="9">
    <citation type="journal article" date="2004" name="Acta Crystallogr. D">
        <title>Soybean lipoxygenase-3 in complex with 4-nitrocatechol.</title>
        <authorList>
            <person name="Skrzypczak-Jankun E."/>
            <person name="Borbulevych O.Y."/>
            <person name="Jankun J."/>
        </authorList>
    </citation>
    <scope>X-RAY CRYSTALLOGRAPHY (2.15 ANGSTROMS) IN COMPLEX WITH IRON IONS AND 4-NITROCATECHOL</scope>
</reference>
<reference key="10">
    <citation type="journal article" date="2004" name="Proteins">
        <title>Lipoxygenase interactions with natural flavonoid, quercetin, reveal a complex with protocatechuic acid in its X-ray structure at 2.1 A resolution.</title>
        <authorList>
            <person name="Borbulevych O.Y."/>
            <person name="Jankun J."/>
            <person name="Selman S.H."/>
            <person name="Skrzypczak-Jankun E."/>
        </authorList>
    </citation>
    <scope>X-RAY CRYSTALLOGRAPHY (2.1 ANGSTROMS) IN COMPLEX WITH IRON IONS AND PROTOCATECHUIC ACID</scope>
</reference>
<sequence>MLGGLLHRGHKIKGTVVLMRKNVLHVNSVTSVGGIIGQGLDLVGSTLDTLTAFLGRPVSLQLISATKADANGKGKLGKATFLEGIITSLPTLGAGQSAFKINFEWDDGSGILGAFYIKNFMQTEFFLVSLTLEDIPNHGSIHFVCNSWIYNAKLFKSDRIFFANQTYLPSETPAPLVKYREEELHNLRGDGTGERKEWERVYDYDVYNDLGDPDKGENHARPVLGGNDTFPYPRRGRTGRKPTRKDPNSESRSNDVYLPRDEAFGHLKSSDFLTYGLKSVSQNVLPLLQSAFDLNFTPREFDSFDEVHGLYSGGIKLPTDIISKISPLPVLKEIFRTDGEQALKFPPPKVIQVSKSAWMTDEEFAREMLAGVNPNLIRCLKEFPPRSKLDSQVYGDHTSQITKEHLEPNLEGLTVDEAIQNKRLFLLGHHDPIMPYLRRINATSTKAYATRTILFLKNDGTLRPLAIELSLPHPQGDQSGAFSQVFLPADEGVESSIWLLAKAYVVVNDSCYHQLVSHWLNTHAVVEPFIIATNRHLSVVHPIYKLLHPHYRDTMNINGLARLSLVNDGGVIEQTFLWGRYSVEMSAVVYKDWVFTDQALPADLIKRGMAIEDPSCPHGIRLVIEDYPYAVDGLEIWDAIKTWVHEYVFLYYKSDDTLREDPELQACWKELVEVGHGDKKNEPWWPKMQTREELVEACAIIIWTASALHAAVNFGQYPYGGLILNRPTLSRRFMPEKGSAEYEELRKNPQKAYLKTITPKFQTLIDLSVIEILSRHASDEVYLGERDNPNWTSDTRALEAFKRFGNKLAQIENKLSERNNDEKLRNRCGPVQMPYTLLLPSSKEGLTFRGIPNSISI</sequence>
<organism>
    <name type="scientific">Glycine max</name>
    <name type="common">Soybean</name>
    <name type="synonym">Glycine hispida</name>
    <dbReference type="NCBI Taxonomy" id="3847"/>
    <lineage>
        <taxon>Eukaryota</taxon>
        <taxon>Viridiplantae</taxon>
        <taxon>Streptophyta</taxon>
        <taxon>Embryophyta</taxon>
        <taxon>Tracheophyta</taxon>
        <taxon>Spermatophyta</taxon>
        <taxon>Magnoliopsida</taxon>
        <taxon>eudicotyledons</taxon>
        <taxon>Gunneridae</taxon>
        <taxon>Pentapetalae</taxon>
        <taxon>rosids</taxon>
        <taxon>fabids</taxon>
        <taxon>Fabales</taxon>
        <taxon>Fabaceae</taxon>
        <taxon>Papilionoideae</taxon>
        <taxon>50 kb inversion clade</taxon>
        <taxon>NPAAA clade</taxon>
        <taxon>indigoferoid/millettioid clade</taxon>
        <taxon>Phaseoleae</taxon>
        <taxon>Glycine</taxon>
        <taxon>Glycine subgen. Soja</taxon>
    </lineage>
</organism>
<comment type="function">
    <text>Plant lipoxygenase may be involved in a number of diverse aspects of plant physiology including growth and development, pest resistance, and senescence or responses to wounding. It catalyzes the hydroperoxidation of lipids containing a cis,cis-1,4-pentadiene structure.</text>
</comment>
<comment type="catalytic activity">
    <reaction>
        <text>(9Z,12Z)-octadecadienoate + O2 = (9S)-hydroperoxy-(10E,12Z)-octadecadienoate</text>
        <dbReference type="Rhea" id="RHEA:30291"/>
        <dbReference type="ChEBI" id="CHEBI:15379"/>
        <dbReference type="ChEBI" id="CHEBI:30245"/>
        <dbReference type="ChEBI" id="CHEBI:60955"/>
        <dbReference type="EC" id="1.13.11.58"/>
    </reaction>
</comment>
<comment type="cofactor">
    <cofactor evidence="2">
        <name>Fe cation</name>
        <dbReference type="ChEBI" id="CHEBI:24875"/>
    </cofactor>
    <text evidence="2">Binds 1 Fe cation per subunit. Iron is tightly bound.</text>
</comment>
<comment type="pathway">
    <text evidence="2">Lipid metabolism; oxylipin biosynthesis.</text>
</comment>
<comment type="subunit">
    <text evidence="4 5 6 7 8">Monomer.</text>
</comment>
<comment type="subcellular location">
    <subcellularLocation>
        <location>Cytoplasm</location>
    </subcellularLocation>
</comment>
<comment type="miscellaneous">
    <text>Soybean contains at least 4 distinct isoenzymes, L-1, L-2, L-3a and L-3b in dry seeds, and at least two distinct isozymes in the hypocotyl/radicle region of the seedling stem.</text>
</comment>
<comment type="similarity">
    <text evidence="10">Belongs to the lipoxygenase family.</text>
</comment>
<protein>
    <recommendedName>
        <fullName>Seed linoleate 9S-lipoxygenase-3</fullName>
        <ecNumber>1.13.11.58</ecNumber>
    </recommendedName>
    <alternativeName>
        <fullName>Lipoxygenase-3</fullName>
        <shortName>L-3</shortName>
    </alternativeName>
</protein>
<gene>
    <name type="primary">LOX1.3</name>
    <name type="synonym">LOX3</name>
</gene>
<name>LOX3_SOYBN</name>